<reference key="1">
    <citation type="journal article" date="2009" name="Appl. Environ. Microbiol.">
        <title>Genome analysis of the meat starter culture bacterium Staphylococcus carnosus TM300.</title>
        <authorList>
            <person name="Rosenstein R."/>
            <person name="Nerz C."/>
            <person name="Biswas L."/>
            <person name="Resch A."/>
            <person name="Raddatz G."/>
            <person name="Schuster S.C."/>
            <person name="Goetz F."/>
        </authorList>
    </citation>
    <scope>NUCLEOTIDE SEQUENCE [LARGE SCALE GENOMIC DNA]</scope>
    <source>
        <strain>TM300</strain>
    </source>
</reference>
<feature type="chain" id="PRO_1000213277" description="ATP phosphoribosyltransferase">
    <location>
        <begin position="1"/>
        <end position="205"/>
    </location>
</feature>
<dbReference type="EC" id="2.4.2.17" evidence="1"/>
<dbReference type="EMBL" id="AM295250">
    <property type="protein sequence ID" value="CAL27548.1"/>
    <property type="molecule type" value="Genomic_DNA"/>
</dbReference>
<dbReference type="RefSeq" id="WP_015899891.1">
    <property type="nucleotide sequence ID" value="NC_012121.1"/>
</dbReference>
<dbReference type="SMR" id="B9DQ89"/>
<dbReference type="GeneID" id="93795573"/>
<dbReference type="KEGG" id="sca:SCA_0636"/>
<dbReference type="eggNOG" id="COG0040">
    <property type="taxonomic scope" value="Bacteria"/>
</dbReference>
<dbReference type="HOGENOM" id="CLU_038115_2_0_9"/>
<dbReference type="OrthoDB" id="9801867at2"/>
<dbReference type="BioCyc" id="SCAR396513:SCA_RS03230-MONOMER"/>
<dbReference type="UniPathway" id="UPA00031">
    <property type="reaction ID" value="UER00006"/>
</dbReference>
<dbReference type="Proteomes" id="UP000000444">
    <property type="component" value="Chromosome"/>
</dbReference>
<dbReference type="GO" id="GO:0005737">
    <property type="term" value="C:cytoplasm"/>
    <property type="evidence" value="ECO:0007669"/>
    <property type="project" value="UniProtKB-SubCell"/>
</dbReference>
<dbReference type="GO" id="GO:0005524">
    <property type="term" value="F:ATP binding"/>
    <property type="evidence" value="ECO:0007669"/>
    <property type="project" value="UniProtKB-KW"/>
</dbReference>
<dbReference type="GO" id="GO:0003879">
    <property type="term" value="F:ATP phosphoribosyltransferase activity"/>
    <property type="evidence" value="ECO:0007669"/>
    <property type="project" value="UniProtKB-UniRule"/>
</dbReference>
<dbReference type="GO" id="GO:0000105">
    <property type="term" value="P:L-histidine biosynthetic process"/>
    <property type="evidence" value="ECO:0007669"/>
    <property type="project" value="UniProtKB-UniRule"/>
</dbReference>
<dbReference type="CDD" id="cd13595">
    <property type="entry name" value="PBP2_HisGs"/>
    <property type="match status" value="1"/>
</dbReference>
<dbReference type="FunFam" id="3.40.190.10:FF:000008">
    <property type="entry name" value="ATP phosphoribosyltransferase"/>
    <property type="match status" value="1"/>
</dbReference>
<dbReference type="Gene3D" id="3.40.190.10">
    <property type="entry name" value="Periplasmic binding protein-like II"/>
    <property type="match status" value="2"/>
</dbReference>
<dbReference type="HAMAP" id="MF_01018">
    <property type="entry name" value="HisG_Short"/>
    <property type="match status" value="1"/>
</dbReference>
<dbReference type="InterPro" id="IPR013820">
    <property type="entry name" value="ATP_PRibTrfase_cat"/>
</dbReference>
<dbReference type="InterPro" id="IPR001348">
    <property type="entry name" value="ATP_PRibTrfase_HisG"/>
</dbReference>
<dbReference type="InterPro" id="IPR024893">
    <property type="entry name" value="ATP_PRibTrfase_HisG_short"/>
</dbReference>
<dbReference type="NCBIfam" id="TIGR00070">
    <property type="entry name" value="hisG"/>
    <property type="match status" value="1"/>
</dbReference>
<dbReference type="PANTHER" id="PTHR21403:SF8">
    <property type="entry name" value="ATP PHOSPHORIBOSYLTRANSFERASE"/>
    <property type="match status" value="1"/>
</dbReference>
<dbReference type="PANTHER" id="PTHR21403">
    <property type="entry name" value="ATP PHOSPHORIBOSYLTRANSFERASE ATP-PRTASE"/>
    <property type="match status" value="1"/>
</dbReference>
<dbReference type="Pfam" id="PF01634">
    <property type="entry name" value="HisG"/>
    <property type="match status" value="1"/>
</dbReference>
<dbReference type="SUPFAM" id="SSF53850">
    <property type="entry name" value="Periplasmic binding protein-like II"/>
    <property type="match status" value="1"/>
</dbReference>
<comment type="function">
    <text evidence="1">Catalyzes the condensation of ATP and 5-phosphoribose 1-diphosphate to form N'-(5'-phosphoribosyl)-ATP (PR-ATP). Has a crucial role in the pathway because the rate of histidine biosynthesis seems to be controlled primarily by regulation of HisG enzymatic activity.</text>
</comment>
<comment type="catalytic activity">
    <reaction evidence="1">
        <text>1-(5-phospho-beta-D-ribosyl)-ATP + diphosphate = 5-phospho-alpha-D-ribose 1-diphosphate + ATP</text>
        <dbReference type="Rhea" id="RHEA:18473"/>
        <dbReference type="ChEBI" id="CHEBI:30616"/>
        <dbReference type="ChEBI" id="CHEBI:33019"/>
        <dbReference type="ChEBI" id="CHEBI:58017"/>
        <dbReference type="ChEBI" id="CHEBI:73183"/>
        <dbReference type="EC" id="2.4.2.17"/>
    </reaction>
</comment>
<comment type="pathway">
    <text evidence="1">Amino-acid biosynthesis; L-histidine biosynthesis; L-histidine from 5-phospho-alpha-D-ribose 1-diphosphate: step 1/9.</text>
</comment>
<comment type="subunit">
    <text evidence="1">Heteromultimer composed of HisG and HisZ subunits.</text>
</comment>
<comment type="subcellular location">
    <subcellularLocation>
        <location evidence="1">Cytoplasm</location>
    </subcellularLocation>
</comment>
<comment type="domain">
    <text>Lacks the C-terminal regulatory region which is replaced by HisZ.</text>
</comment>
<comment type="similarity">
    <text evidence="1">Belongs to the ATP phosphoribosyltransferase family. Short subfamily.</text>
</comment>
<keyword id="KW-0028">Amino-acid biosynthesis</keyword>
<keyword id="KW-0067">ATP-binding</keyword>
<keyword id="KW-0963">Cytoplasm</keyword>
<keyword id="KW-0328">Glycosyltransferase</keyword>
<keyword id="KW-0368">Histidine biosynthesis</keyword>
<keyword id="KW-0547">Nucleotide-binding</keyword>
<keyword id="KW-1185">Reference proteome</keyword>
<keyword id="KW-0808">Transferase</keyword>
<protein>
    <recommendedName>
        <fullName evidence="1">ATP phosphoribosyltransferase</fullName>
        <shortName evidence="1">ATP-PRT</shortName>
        <shortName evidence="1">ATP-PRTase</shortName>
        <ecNumber evidence="1">2.4.2.17</ecNumber>
    </recommendedName>
</protein>
<sequence length="205" mass="22885">MLTVALSKGRLLKDFIKFLERNNNHVWADAIIHRERKLQITADSIKFILVKGSDVPTYVEEGIADIGITGSDILKERPNRNINNYIDLPFGECHFSVAAKPNVTNIQRVATTYVKTTRDYFNQKGTDISIIQLSGSVELAAVVDMVDAIVDIVQTGTTLKSNGLEEREQIGEINARLITNKHSFFSKSKAIENFIQQLGVSIHAQ</sequence>
<accession>B9DQ89</accession>
<proteinExistence type="inferred from homology"/>
<gene>
    <name evidence="1" type="primary">hisG</name>
    <name type="ordered locus">Sca_0636</name>
</gene>
<organism>
    <name type="scientific">Staphylococcus carnosus (strain TM300)</name>
    <dbReference type="NCBI Taxonomy" id="396513"/>
    <lineage>
        <taxon>Bacteria</taxon>
        <taxon>Bacillati</taxon>
        <taxon>Bacillota</taxon>
        <taxon>Bacilli</taxon>
        <taxon>Bacillales</taxon>
        <taxon>Staphylococcaceae</taxon>
        <taxon>Staphylococcus</taxon>
    </lineage>
</organism>
<name>HIS1_STACT</name>
<evidence type="ECO:0000255" key="1">
    <source>
        <dbReference type="HAMAP-Rule" id="MF_01018"/>
    </source>
</evidence>